<reference key="1">
    <citation type="journal article" date="2008" name="PLoS Genet.">
        <title>Complete genome sequence of the N2-fixing broad host range endophyte Klebsiella pneumoniae 342 and virulence predictions verified in mice.</title>
        <authorList>
            <person name="Fouts D.E."/>
            <person name="Tyler H.L."/>
            <person name="DeBoy R.T."/>
            <person name="Daugherty S."/>
            <person name="Ren Q."/>
            <person name="Badger J.H."/>
            <person name="Durkin A.S."/>
            <person name="Huot H."/>
            <person name="Shrivastava S."/>
            <person name="Kothari S."/>
            <person name="Dodson R.J."/>
            <person name="Mohamoud Y."/>
            <person name="Khouri H."/>
            <person name="Roesch L.F.W."/>
            <person name="Krogfelt K.A."/>
            <person name="Struve C."/>
            <person name="Triplett E.W."/>
            <person name="Methe B.A."/>
        </authorList>
    </citation>
    <scope>NUCLEOTIDE SEQUENCE [LARGE SCALE GENOMIC DNA]</scope>
    <source>
        <strain>342</strain>
    </source>
</reference>
<sequence>MQQLQNVIESAFERRADITPANVDTVTREAVNQVIALLDSGALRVAEKIDGQWVTHQWLKKAVLLSFRINDNQVIDGAESRYFDKVPMKFADYDEARFQKEGFRVVPPAAVRQGAFIARNTVLMPSYVNIGAYVDEGTMVDTWATVGSCAQIGKNVHLSGGVGIGGVLEPLQANPTIIEDNCFIGARSEVVEGVIVEEGSVISMGVYLGQSTKIYDRETGEVFYGRVPAGSVVVSGNLPSKDGKYSLYCAVIVKKVDAKTRGKVGINELLRTID</sequence>
<name>DAPD_KLEP3</name>
<feature type="chain" id="PRO_1000134051" description="2,3,4,5-tetrahydropyridine-2,6-dicarboxylate N-succinyltransferase">
    <location>
        <begin position="1"/>
        <end position="274"/>
    </location>
</feature>
<protein>
    <recommendedName>
        <fullName evidence="1">2,3,4,5-tetrahydropyridine-2,6-dicarboxylate N-succinyltransferase</fullName>
        <ecNumber evidence="1">2.3.1.117</ecNumber>
    </recommendedName>
    <alternativeName>
        <fullName evidence="1">Tetrahydrodipicolinate N-succinyltransferase</fullName>
        <shortName evidence="1">THP succinyltransferase</shortName>
        <shortName evidence="1">Tetrahydropicolinate succinylase</shortName>
    </alternativeName>
</protein>
<evidence type="ECO:0000255" key="1">
    <source>
        <dbReference type="HAMAP-Rule" id="MF_00811"/>
    </source>
</evidence>
<keyword id="KW-0012">Acyltransferase</keyword>
<keyword id="KW-0028">Amino-acid biosynthesis</keyword>
<keyword id="KW-0963">Cytoplasm</keyword>
<keyword id="KW-0220">Diaminopimelate biosynthesis</keyword>
<keyword id="KW-0457">Lysine biosynthesis</keyword>
<keyword id="KW-0677">Repeat</keyword>
<keyword id="KW-0808">Transferase</keyword>
<organism>
    <name type="scientific">Klebsiella pneumoniae (strain 342)</name>
    <dbReference type="NCBI Taxonomy" id="507522"/>
    <lineage>
        <taxon>Bacteria</taxon>
        <taxon>Pseudomonadati</taxon>
        <taxon>Pseudomonadota</taxon>
        <taxon>Gammaproteobacteria</taxon>
        <taxon>Enterobacterales</taxon>
        <taxon>Enterobacteriaceae</taxon>
        <taxon>Klebsiella/Raoultella group</taxon>
        <taxon>Klebsiella</taxon>
        <taxon>Klebsiella pneumoniae complex</taxon>
    </lineage>
</organism>
<comment type="catalytic activity">
    <reaction evidence="1">
        <text>(S)-2,3,4,5-tetrahydrodipicolinate + succinyl-CoA + H2O = (S)-2-succinylamino-6-oxoheptanedioate + CoA</text>
        <dbReference type="Rhea" id="RHEA:17325"/>
        <dbReference type="ChEBI" id="CHEBI:15377"/>
        <dbReference type="ChEBI" id="CHEBI:15685"/>
        <dbReference type="ChEBI" id="CHEBI:16845"/>
        <dbReference type="ChEBI" id="CHEBI:57287"/>
        <dbReference type="ChEBI" id="CHEBI:57292"/>
        <dbReference type="EC" id="2.3.1.117"/>
    </reaction>
</comment>
<comment type="pathway">
    <text evidence="1">Amino-acid biosynthesis; L-lysine biosynthesis via DAP pathway; LL-2,6-diaminopimelate from (S)-tetrahydrodipicolinate (succinylase route): step 1/3.</text>
</comment>
<comment type="subcellular location">
    <subcellularLocation>
        <location evidence="1">Cytoplasm</location>
    </subcellularLocation>
</comment>
<comment type="similarity">
    <text evidence="1">Belongs to the transferase hexapeptide repeat family.</text>
</comment>
<proteinExistence type="inferred from homology"/>
<gene>
    <name evidence="1" type="primary">dapD</name>
    <name type="ordered locus">KPK_4554</name>
</gene>
<dbReference type="EC" id="2.3.1.117" evidence="1"/>
<dbReference type="EMBL" id="CP000964">
    <property type="protein sequence ID" value="ACI10370.1"/>
    <property type="molecule type" value="Genomic_DNA"/>
</dbReference>
<dbReference type="SMR" id="B5Y1K5"/>
<dbReference type="KEGG" id="kpe:KPK_4554"/>
<dbReference type="HOGENOM" id="CLU_050859_0_1_6"/>
<dbReference type="UniPathway" id="UPA00034">
    <property type="reaction ID" value="UER00019"/>
</dbReference>
<dbReference type="Proteomes" id="UP000001734">
    <property type="component" value="Chromosome"/>
</dbReference>
<dbReference type="GO" id="GO:0005737">
    <property type="term" value="C:cytoplasm"/>
    <property type="evidence" value="ECO:0007669"/>
    <property type="project" value="UniProtKB-SubCell"/>
</dbReference>
<dbReference type="GO" id="GO:0008666">
    <property type="term" value="F:2,3,4,5-tetrahydropyridine-2,6-dicarboxylate N-succinyltransferase activity"/>
    <property type="evidence" value="ECO:0007669"/>
    <property type="project" value="UniProtKB-UniRule"/>
</dbReference>
<dbReference type="GO" id="GO:0016779">
    <property type="term" value="F:nucleotidyltransferase activity"/>
    <property type="evidence" value="ECO:0007669"/>
    <property type="project" value="TreeGrafter"/>
</dbReference>
<dbReference type="GO" id="GO:0019877">
    <property type="term" value="P:diaminopimelate biosynthetic process"/>
    <property type="evidence" value="ECO:0007669"/>
    <property type="project" value="UniProtKB-UniRule"/>
</dbReference>
<dbReference type="GO" id="GO:0009089">
    <property type="term" value="P:lysine biosynthetic process via diaminopimelate"/>
    <property type="evidence" value="ECO:0007669"/>
    <property type="project" value="UniProtKB-UniRule"/>
</dbReference>
<dbReference type="CDD" id="cd03350">
    <property type="entry name" value="LbH_THP_succinylT"/>
    <property type="match status" value="1"/>
</dbReference>
<dbReference type="FunFam" id="2.160.10.10:FF:000004">
    <property type="entry name" value="2,3,4,5-tetrahydropyridine-2,6-dicarboxylate N-succinyltransferase"/>
    <property type="match status" value="1"/>
</dbReference>
<dbReference type="Gene3D" id="2.160.10.10">
    <property type="entry name" value="Hexapeptide repeat proteins"/>
    <property type="match status" value="1"/>
</dbReference>
<dbReference type="Gene3D" id="1.10.166.10">
    <property type="entry name" value="Tetrahydrodipicolinate-N-succinyltransferase, N-terminal domain"/>
    <property type="match status" value="1"/>
</dbReference>
<dbReference type="HAMAP" id="MF_00811">
    <property type="entry name" value="DapD"/>
    <property type="match status" value="1"/>
</dbReference>
<dbReference type="InterPro" id="IPR005664">
    <property type="entry name" value="DapD_Trfase_Hexpep_rpt_fam"/>
</dbReference>
<dbReference type="InterPro" id="IPR001451">
    <property type="entry name" value="Hexapep"/>
</dbReference>
<dbReference type="InterPro" id="IPR018357">
    <property type="entry name" value="Hexapep_transf_CS"/>
</dbReference>
<dbReference type="InterPro" id="IPR023180">
    <property type="entry name" value="THP_succinylTrfase_dom1"/>
</dbReference>
<dbReference type="InterPro" id="IPR037133">
    <property type="entry name" value="THP_succinylTrfase_N_sf"/>
</dbReference>
<dbReference type="InterPro" id="IPR011004">
    <property type="entry name" value="Trimer_LpxA-like_sf"/>
</dbReference>
<dbReference type="NCBIfam" id="TIGR00965">
    <property type="entry name" value="dapD"/>
    <property type="match status" value="1"/>
</dbReference>
<dbReference type="NCBIfam" id="NF008808">
    <property type="entry name" value="PRK11830.1"/>
    <property type="match status" value="1"/>
</dbReference>
<dbReference type="PANTHER" id="PTHR19136:SF52">
    <property type="entry name" value="2,3,4,5-TETRAHYDROPYRIDINE-2,6-DICARBOXYLATE N-SUCCINYLTRANSFERASE"/>
    <property type="match status" value="1"/>
</dbReference>
<dbReference type="PANTHER" id="PTHR19136">
    <property type="entry name" value="MOLYBDENUM COFACTOR GUANYLYLTRANSFERASE"/>
    <property type="match status" value="1"/>
</dbReference>
<dbReference type="Pfam" id="PF14602">
    <property type="entry name" value="Hexapep_2"/>
    <property type="match status" value="1"/>
</dbReference>
<dbReference type="Pfam" id="PF14805">
    <property type="entry name" value="THDPS_N_2"/>
    <property type="match status" value="1"/>
</dbReference>
<dbReference type="SUPFAM" id="SSF51161">
    <property type="entry name" value="Trimeric LpxA-like enzymes"/>
    <property type="match status" value="1"/>
</dbReference>
<dbReference type="PROSITE" id="PS00101">
    <property type="entry name" value="HEXAPEP_TRANSFERASES"/>
    <property type="match status" value="1"/>
</dbReference>
<accession>B5Y1K5</accession>